<gene>
    <name type="ordered locus">RHOS4_00640</name>
    <name type="ORF">RSP_1491</name>
</gene>
<reference key="1">
    <citation type="submission" date="2005-09" db="EMBL/GenBank/DDBJ databases">
        <title>Complete sequence of chromosome 1 of Rhodobacter sphaeroides 2.4.1.</title>
        <authorList>
            <person name="Copeland A."/>
            <person name="Lucas S."/>
            <person name="Lapidus A."/>
            <person name="Barry K."/>
            <person name="Detter J.C."/>
            <person name="Glavina T."/>
            <person name="Hammon N."/>
            <person name="Israni S."/>
            <person name="Pitluck S."/>
            <person name="Richardson P."/>
            <person name="Mackenzie C."/>
            <person name="Choudhary M."/>
            <person name="Larimer F."/>
            <person name="Hauser L.J."/>
            <person name="Land M."/>
            <person name="Donohue T.J."/>
            <person name="Kaplan S."/>
        </authorList>
    </citation>
    <scope>NUCLEOTIDE SEQUENCE [LARGE SCALE GENOMIC DNA]</scope>
    <source>
        <strain>ATCC 17023 / DSM 158 / JCM 6121 / CCUG 31486 / LMG 2827 / NBRC 12203 / NCIMB 8253 / ATH 2.4.1.</strain>
    </source>
</reference>
<keyword id="KW-1185">Reference proteome</keyword>
<accession>Q3J6F2</accession>
<name>Y064_CERS4</name>
<protein>
    <recommendedName>
        <fullName evidence="1">UPF0434 protein RHOS4_00640</fullName>
    </recommendedName>
</protein>
<organism>
    <name type="scientific">Cereibacter sphaeroides (strain ATCC 17023 / DSM 158 / JCM 6121 / CCUG 31486 / LMG 2827 / NBRC 12203 / NCIMB 8253 / ATH 2.4.1.)</name>
    <name type="common">Rhodobacter sphaeroides</name>
    <dbReference type="NCBI Taxonomy" id="272943"/>
    <lineage>
        <taxon>Bacteria</taxon>
        <taxon>Pseudomonadati</taxon>
        <taxon>Pseudomonadota</taxon>
        <taxon>Alphaproteobacteria</taxon>
        <taxon>Rhodobacterales</taxon>
        <taxon>Paracoccaceae</taxon>
        <taxon>Cereibacter</taxon>
    </lineage>
</organism>
<sequence>MTGTTLFDRRMLEALVCPVTQAGLAYDADRQELISKQARLAFPIRDGIPIMLVSEAREL</sequence>
<comment type="similarity">
    <text evidence="1">Belongs to the UPF0434 family.</text>
</comment>
<dbReference type="EMBL" id="CP000143">
    <property type="protein sequence ID" value="ABA77632.1"/>
    <property type="molecule type" value="Genomic_DNA"/>
</dbReference>
<dbReference type="RefSeq" id="WP_002722161.1">
    <property type="nucleotide sequence ID" value="NZ_CP030271.1"/>
</dbReference>
<dbReference type="RefSeq" id="YP_351533.1">
    <property type="nucleotide sequence ID" value="NC_007493.2"/>
</dbReference>
<dbReference type="SMR" id="Q3J6F2"/>
<dbReference type="STRING" id="272943.RSP_1491"/>
<dbReference type="EnsemblBacteria" id="ABA77632">
    <property type="protein sequence ID" value="ABA77632"/>
    <property type="gene ID" value="RSP_1491"/>
</dbReference>
<dbReference type="KEGG" id="rsp:RSP_1491"/>
<dbReference type="PATRIC" id="fig|272943.9.peg.361"/>
<dbReference type="eggNOG" id="COG2835">
    <property type="taxonomic scope" value="Bacteria"/>
</dbReference>
<dbReference type="OrthoDB" id="9812205at2"/>
<dbReference type="PhylomeDB" id="Q3J6F2"/>
<dbReference type="Proteomes" id="UP000002703">
    <property type="component" value="Chromosome 1"/>
</dbReference>
<dbReference type="GO" id="GO:0005829">
    <property type="term" value="C:cytosol"/>
    <property type="evidence" value="ECO:0007669"/>
    <property type="project" value="TreeGrafter"/>
</dbReference>
<dbReference type="FunFam" id="2.20.25.10:FF:000002">
    <property type="entry name" value="UPF0434 protein YcaR"/>
    <property type="match status" value="1"/>
</dbReference>
<dbReference type="Gene3D" id="2.20.25.10">
    <property type="match status" value="1"/>
</dbReference>
<dbReference type="HAMAP" id="MF_01187">
    <property type="entry name" value="UPF0434"/>
    <property type="match status" value="1"/>
</dbReference>
<dbReference type="InterPro" id="IPR005651">
    <property type="entry name" value="Trm112-like"/>
</dbReference>
<dbReference type="PANTHER" id="PTHR33505:SF4">
    <property type="entry name" value="PROTEIN PREY, MITOCHONDRIAL"/>
    <property type="match status" value="1"/>
</dbReference>
<dbReference type="PANTHER" id="PTHR33505">
    <property type="entry name" value="ZGC:162634"/>
    <property type="match status" value="1"/>
</dbReference>
<dbReference type="Pfam" id="PF03966">
    <property type="entry name" value="Trm112p"/>
    <property type="match status" value="1"/>
</dbReference>
<dbReference type="SUPFAM" id="SSF158997">
    <property type="entry name" value="Trm112p-like"/>
    <property type="match status" value="1"/>
</dbReference>
<feature type="chain" id="PRO_0000291148" description="UPF0434 protein RHOS4_00640">
    <location>
        <begin position="1"/>
        <end position="59"/>
    </location>
</feature>
<proteinExistence type="inferred from homology"/>
<evidence type="ECO:0000255" key="1">
    <source>
        <dbReference type="HAMAP-Rule" id="MF_01187"/>
    </source>
</evidence>